<proteinExistence type="evidence at transcript level"/>
<evidence type="ECO:0000250" key="1">
    <source>
        <dbReference type="UniProtKB" id="P29191"/>
    </source>
</evidence>
<evidence type="ECO:0000256" key="2">
    <source>
        <dbReference type="SAM" id="MobiDB-lite"/>
    </source>
</evidence>
<evidence type="ECO:0000305" key="3"/>
<feature type="chain" id="PRO_0000099218" description="39kDa core protein OPG130">
    <location>
        <begin position="1"/>
        <end position="281"/>
    </location>
</feature>
<feature type="region of interest" description="Disordered" evidence="2">
    <location>
        <begin position="1"/>
        <end position="33"/>
    </location>
</feature>
<feature type="region of interest" description="Disordered" evidence="2">
    <location>
        <begin position="91"/>
        <end position="112"/>
    </location>
</feature>
<feature type="region of interest" description="Disordered" evidence="2">
    <location>
        <begin position="149"/>
        <end position="192"/>
    </location>
</feature>
<feature type="compositionally biased region" description="Polar residues" evidence="2">
    <location>
        <begin position="1"/>
        <end position="22"/>
    </location>
</feature>
<feature type="compositionally biased region" description="Basic and acidic residues" evidence="2">
    <location>
        <begin position="24"/>
        <end position="33"/>
    </location>
</feature>
<feature type="compositionally biased region" description="Polar residues" evidence="2">
    <location>
        <begin position="94"/>
        <end position="112"/>
    </location>
</feature>
<feature type="compositionally biased region" description="Low complexity" evidence="2">
    <location>
        <begin position="154"/>
        <end position="175"/>
    </location>
</feature>
<name>PG130_VACCC</name>
<keyword id="KW-1043">Host membrane</keyword>
<keyword id="KW-0426">Late protein</keyword>
<keyword id="KW-0472">Membrane</keyword>
<keyword id="KW-1185">Reference proteome</keyword>
<keyword id="KW-0946">Virion</keyword>
<organism>
    <name type="scientific">Vaccinia virus (strain Copenhagen)</name>
    <name type="common">VACV</name>
    <dbReference type="NCBI Taxonomy" id="10249"/>
    <lineage>
        <taxon>Viruses</taxon>
        <taxon>Varidnaviria</taxon>
        <taxon>Bamfordvirae</taxon>
        <taxon>Nucleocytoviricota</taxon>
        <taxon>Pokkesviricetes</taxon>
        <taxon>Chitovirales</taxon>
        <taxon>Poxviridae</taxon>
        <taxon>Chordopoxvirinae</taxon>
        <taxon>Orthopoxvirus</taxon>
        <taxon>Vaccinia virus</taxon>
    </lineage>
</organism>
<organismHost>
    <name type="scientific">Homo sapiens</name>
    <name type="common">Human</name>
    <dbReference type="NCBI Taxonomy" id="9606"/>
</organismHost>
<reference key="1">
    <citation type="journal article" date="1990" name="Virology">
        <title>The complete DNA sequence of vaccinia virus.</title>
        <authorList>
            <person name="Goebel S.J."/>
            <person name="Johnson G.P."/>
            <person name="Perkus M.E."/>
            <person name="Davis S.W."/>
            <person name="Winslow J.P."/>
            <person name="Paoletti E."/>
        </authorList>
    </citation>
    <scope>NUCLEOTIDE SEQUENCE [LARGE SCALE GENOMIC DNA]</scope>
</reference>
<reference key="2">
    <citation type="journal article" date="1990" name="Virology">
        <title>Appendix to 'The complete DNA sequence of vaccinia virus'.</title>
        <authorList>
            <person name="Goebel S.J."/>
            <person name="Johnson G.P."/>
            <person name="Perkus M.E."/>
            <person name="Davis S.W."/>
            <person name="Winslow J.P."/>
            <person name="Paoletti E."/>
        </authorList>
    </citation>
    <scope>NUCLEOTIDE SEQUENCE [LARGE SCALE GENOMIC DNA]</scope>
</reference>
<dbReference type="EMBL" id="M35027">
    <property type="protein sequence ID" value="AAA48120.1"/>
    <property type="molecule type" value="Genomic_DNA"/>
</dbReference>
<dbReference type="PIR" id="F42517">
    <property type="entry name" value="F42517"/>
</dbReference>
<dbReference type="SMR" id="P20983"/>
<dbReference type="Proteomes" id="UP000008269">
    <property type="component" value="Segment"/>
</dbReference>
<dbReference type="GO" id="GO:0044173">
    <property type="term" value="C:host cell endoplasmic reticulum-Golgi intermediate compartment membrane"/>
    <property type="evidence" value="ECO:0007669"/>
    <property type="project" value="UniProtKB-SubCell"/>
</dbReference>
<dbReference type="GO" id="GO:0016020">
    <property type="term" value="C:membrane"/>
    <property type="evidence" value="ECO:0007669"/>
    <property type="project" value="UniProtKB-KW"/>
</dbReference>
<dbReference type="GO" id="GO:0044423">
    <property type="term" value="C:virion component"/>
    <property type="evidence" value="ECO:0007669"/>
    <property type="project" value="UniProtKB-KW"/>
</dbReference>
<dbReference type="InterPro" id="IPR010396">
    <property type="entry name" value="Poxvirus_A4L"/>
</dbReference>
<dbReference type="Pfam" id="PF06193">
    <property type="entry name" value="Orthopox_A5L"/>
    <property type="match status" value="1"/>
</dbReference>
<accession>P20983</accession>
<gene>
    <name type="primary">OPG130</name>
    <name type="ORF">A4L</name>
</gene>
<protein>
    <recommendedName>
        <fullName>39kDa core protein OPG130</fullName>
        <shortName>p39</shortName>
    </recommendedName>
    <alternativeName>
        <fullName>Protein A4</fullName>
    </alternativeName>
</protein>
<comment type="function">
    <text evidence="1">Component of the virion core. Participates in virion assembly.</text>
</comment>
<comment type="subunit">
    <text evidence="1">Interacts with OPG136 and its cleaved form.</text>
</comment>
<comment type="subcellular location">
    <subcellularLocation>
        <location evidence="1">Virion</location>
    </subcellularLocation>
    <subcellularLocation>
        <location evidence="1">Host endoplasmic reticulum-Golgi intermediate compartment membrane</location>
    </subcellularLocation>
    <text evidence="1">Localizes between the core and the membrane; might surround the outer core wall like a palisade (spikes).</text>
</comment>
<comment type="induction">
    <text>Expressed in the late phase of the viral replicative cycle.</text>
</comment>
<comment type="PTM">
    <text evidence="1">Its phosphorylation state is regulated by the OPG054 kinase and the OPG106 phosphatase.</text>
</comment>
<comment type="similarity">
    <text evidence="3">Belongs to the orthopoxvirus OPG130 family.</text>
</comment>
<sequence>MDFFNKFSQGLAESSTPKSSIYYSEEKDPDTKKDEAIEIGLKSQESYYQRQLREQLARDNMMAASRQPIQPLQPTIHITPQPVPTATPAPILLPSSTAPTPKPRQQTNTSSDMSNLFDWLSEDTDAPASSLLPALTPSNAVQDIISKFNKDQKTTTPPSTQPSQTLPTTTCTQQSDGNISCTTPTVTPPQPPIVATVCTPTPTGGTVCTTAQQNPNPGAASQQNLDDMALKDLMSSVEKDMHQLQAETNDLVTNVYDAREYTRRAIDQILQLVKGFERFQK</sequence>